<reference key="1">
    <citation type="journal article" date="1992" name="Biochim. Biophys. Acta">
        <title>cDNA sequence and alternative mRNA splicing of surfactant-associated protein C (SP-C) in rabbit lung.</title>
        <authorList>
            <person name="Connelly I."/>
            <person name="Possmayer F."/>
        </authorList>
    </citation>
    <scope>NUCLEOTIDE SEQUENCE [MRNA]</scope>
    <source>
        <strain>New Zealand white</strain>
        <tissue>Lung</tissue>
    </source>
</reference>
<reference key="2">
    <citation type="journal article" date="1992" name="Am. J. Physiol.">
        <title>Rabbit surfactant protein C: cDNA cloning and regulation of alternatively spliced surfactant protein C mRNAs.</title>
        <authorList>
            <person name="Boggaram V."/>
            <person name="Margana R.K."/>
        </authorList>
    </citation>
    <scope>NUCLEOTIDE SEQUENCE [MRNA]</scope>
    <source>
        <tissue>Lung</tissue>
    </source>
</reference>
<reference key="3">
    <citation type="submission" date="1997-12" db="EMBL/GenBank/DDBJ databases">
        <title>Cloning, sequence and characterization of the rabbit surfactant protein C gene.</title>
        <authorList>
            <person name="Margana R.K."/>
            <person name="Boggaram V."/>
        </authorList>
    </citation>
    <scope>NUCLEOTIDE SEQUENCE</scope>
</reference>
<reference key="4">
    <citation type="journal article" date="1992" name="Exp. Lung Res.">
        <title>Developmental regulation of surfactant-associated proteins in rabbit fetal lung in vivo.</title>
        <authorList>
            <person name="Durham P.L."/>
            <person name="Nanthakumar E.J."/>
            <person name="Snyder J.M."/>
        </authorList>
    </citation>
    <scope>NUCLEOTIDE SEQUENCE [MRNA] OF 24-188</scope>
    <source>
        <tissue>Lung</tissue>
    </source>
</reference>
<reference key="5">
    <citation type="journal article" date="1991" name="FEBS Lett.">
        <title>Canine hydrophobic surfactant polypeptide SP-C. A lipopeptide with one thioester-linked palmitoyl group.</title>
        <authorList>
            <person name="Johansson J."/>
            <person name="Persson P."/>
            <person name="Loewenadler B."/>
            <person name="Robertson B."/>
            <person name="Joernvall H."/>
            <person name="Curstedt T."/>
        </authorList>
    </citation>
    <scope>PROTEIN SEQUENCE OF 24-37</scope>
    <scope>PALMITOYLATION AT CYS-28 AND CYS-29</scope>
</reference>
<dbReference type="EMBL" id="X65078">
    <property type="protein sequence ID" value="CAA46204.1"/>
    <property type="status" value="ALT_INIT"/>
    <property type="molecule type" value="mRNA"/>
</dbReference>
<dbReference type="EMBL" id="S51983">
    <property type="protein sequence ID" value="AAB24761.1"/>
    <property type="molecule type" value="mRNA"/>
</dbReference>
<dbReference type="EMBL" id="AF037445">
    <property type="protein sequence ID" value="AAC18032.1"/>
    <property type="molecule type" value="Genomic_DNA"/>
</dbReference>
<dbReference type="EMBL" id="S51597">
    <property type="protein sequence ID" value="AAB24762.1"/>
    <property type="molecule type" value="mRNA"/>
</dbReference>
<dbReference type="EMBL" id="S51098">
    <property type="protein sequence ID" value="AAB24576.2"/>
    <property type="molecule type" value="mRNA"/>
</dbReference>
<dbReference type="PIR" id="A56766">
    <property type="entry name" value="LNRBC1"/>
</dbReference>
<dbReference type="RefSeq" id="NP_001075791.1">
    <property type="nucleotide sequence ID" value="NM_001082322.1"/>
</dbReference>
<dbReference type="RefSeq" id="XP_008248087.3">
    <property type="nucleotide sequence ID" value="XM_008249865.4"/>
</dbReference>
<dbReference type="SMR" id="P22398"/>
<dbReference type="FunCoup" id="P22398">
    <property type="interactions" value="28"/>
</dbReference>
<dbReference type="STRING" id="9986.ENSOCUP00000048018"/>
<dbReference type="SwissPalm" id="P22398"/>
<dbReference type="PaxDb" id="9986-ENSOCUP00000001748"/>
<dbReference type="GeneID" id="100009162"/>
<dbReference type="KEGG" id="ocu:100009162"/>
<dbReference type="CTD" id="6440"/>
<dbReference type="eggNOG" id="ENOG502S6QH">
    <property type="taxonomic scope" value="Eukaryota"/>
</dbReference>
<dbReference type="InParanoid" id="P22398"/>
<dbReference type="OrthoDB" id="9888901at2759"/>
<dbReference type="Proteomes" id="UP000001811">
    <property type="component" value="Unplaced"/>
</dbReference>
<dbReference type="GO" id="GO:0097208">
    <property type="term" value="C:alveolar lamellar body"/>
    <property type="evidence" value="ECO:0007669"/>
    <property type="project" value="TreeGrafter"/>
</dbReference>
<dbReference type="GO" id="GO:0005615">
    <property type="term" value="C:extracellular space"/>
    <property type="evidence" value="ECO:0007669"/>
    <property type="project" value="TreeGrafter"/>
</dbReference>
<dbReference type="GO" id="GO:0007585">
    <property type="term" value="P:respiratory gaseous exchange by respiratory system"/>
    <property type="evidence" value="ECO:0007669"/>
    <property type="project" value="UniProtKB-KW"/>
</dbReference>
<dbReference type="Gene3D" id="3.30.390.150">
    <property type="match status" value="1"/>
</dbReference>
<dbReference type="InterPro" id="IPR007084">
    <property type="entry name" value="BRICHOS_dom"/>
</dbReference>
<dbReference type="InterPro" id="IPR001729">
    <property type="entry name" value="SP-C"/>
</dbReference>
<dbReference type="InterPro" id="IPR018051">
    <property type="entry name" value="SP-C_palmitoylation_site"/>
</dbReference>
<dbReference type="InterPro" id="IPR015091">
    <property type="entry name" value="Surfactant_protein_propep"/>
</dbReference>
<dbReference type="PANTHER" id="PTHR10800">
    <property type="entry name" value="PULMONARY SURFACTANT-ASSOCIATED PROTEIN C"/>
    <property type="match status" value="1"/>
</dbReference>
<dbReference type="PANTHER" id="PTHR10800:SF4">
    <property type="entry name" value="PULMONARY SURFACTANT-ASSOCIATED PROTEIN C"/>
    <property type="match status" value="1"/>
</dbReference>
<dbReference type="Pfam" id="PF04089">
    <property type="entry name" value="BRICHOS"/>
    <property type="match status" value="1"/>
</dbReference>
<dbReference type="Pfam" id="PF08999">
    <property type="entry name" value="SP_C-Propep"/>
    <property type="match status" value="1"/>
</dbReference>
<dbReference type="SMART" id="SM01039">
    <property type="entry name" value="BRICHOS"/>
    <property type="match status" value="1"/>
</dbReference>
<dbReference type="SMART" id="SM00019">
    <property type="entry name" value="SF_P"/>
    <property type="match status" value="1"/>
</dbReference>
<dbReference type="PROSITE" id="PS50869">
    <property type="entry name" value="BRICHOS"/>
    <property type="match status" value="1"/>
</dbReference>
<dbReference type="PROSITE" id="PS00341">
    <property type="entry name" value="SURFACT_PALMITOYL"/>
    <property type="match status" value="1"/>
</dbReference>
<protein>
    <recommendedName>
        <fullName evidence="2">Surfactant protein C</fullName>
        <shortName>SP-C</shortName>
    </recommendedName>
    <alternativeName>
        <fullName>Pulmonary surfactant-associated protein C</fullName>
    </alternativeName>
    <alternativeName>
        <fullName>Pulmonary surfactant-associated proteolipid SPL(Val)</fullName>
    </alternativeName>
</protein>
<sequence length="188" mass="19836">MDMGSKEALMESPPDYSAAPRGRFGIPCCPVHLKRLLIVVVVVVLVVVVIVGALLMGLHMSQKHTEMVLEMSIGAPEVQQRLALSEWAGTTATFPIGSTGIVTCDYQRLLIAYKPAPGTCCYLMKMAPDSIPSLEALARKFQANPAEPPTQRGQDKGPAAGPASSGGELAFLGAAVSTLCGEVPLIYI</sequence>
<accession>P22398</accession>
<name>PSPC_RABIT</name>
<proteinExistence type="evidence at protein level"/>
<evidence type="ECO:0000250" key="1"/>
<evidence type="ECO:0000250" key="2">
    <source>
        <dbReference type="UniProtKB" id="P11686"/>
    </source>
</evidence>
<evidence type="ECO:0000255" key="3">
    <source>
        <dbReference type="PROSITE-ProRule" id="PRU00255"/>
    </source>
</evidence>
<evidence type="ECO:0000256" key="4">
    <source>
        <dbReference type="SAM" id="MobiDB-lite"/>
    </source>
</evidence>
<evidence type="ECO:0000269" key="5">
    <source>
    </source>
</evidence>
<evidence type="ECO:0000305" key="6"/>
<feature type="propeptide" id="PRO_0000033489" evidence="5">
    <location>
        <begin position="1"/>
        <end position="23"/>
    </location>
</feature>
<feature type="chain" id="PRO_0000033490" description="Surfactant protein C">
    <location>
        <begin position="24"/>
        <end position="58"/>
    </location>
</feature>
<feature type="propeptide" id="PRO_0000033491">
    <location>
        <begin position="59"/>
        <end position="188"/>
    </location>
</feature>
<feature type="domain" description="BRICHOS" evidence="3">
    <location>
        <begin position="94"/>
        <end position="188"/>
    </location>
</feature>
<feature type="region of interest" description="Disordered" evidence="4">
    <location>
        <begin position="144"/>
        <end position="164"/>
    </location>
</feature>
<feature type="lipid moiety-binding region" description="S-palmitoyl cysteine" evidence="5">
    <location>
        <position position="28"/>
    </location>
</feature>
<feature type="lipid moiety-binding region" description="S-palmitoyl cysteine" evidence="5">
    <location>
        <position position="29"/>
    </location>
</feature>
<feature type="disulfide bond" evidence="1">
    <location>
        <begin position="121"/>
        <end position="180"/>
    </location>
</feature>
<feature type="sequence conflict" description="In Ref. 2; AAB24761/AAB24762." evidence="6" ref="2">
    <original>P</original>
    <variation>PP</variation>
    <location>
        <position position="115"/>
    </location>
</feature>
<feature type="sequence conflict" description="In Ref. 4; AAB24576." evidence="6" ref="4">
    <original>G</original>
    <variation>A</variation>
    <location>
        <position position="153"/>
    </location>
</feature>
<feature type="sequence conflict" description="In Ref. 4; AAB24576." evidence="6" ref="4">
    <original>A</original>
    <variation>G</variation>
    <location>
        <position position="159"/>
    </location>
</feature>
<feature type="sequence conflict" description="In Ref. 1; CAA46204." evidence="6" ref="1">
    <original>G</original>
    <variation>R</variation>
    <location>
        <position position="161"/>
    </location>
</feature>
<feature type="sequence conflict" description="In Ref. 4; AAB24576." evidence="6" ref="4">
    <original>I</original>
    <variation>Y</variation>
    <location>
        <position position="186"/>
    </location>
</feature>
<organism>
    <name type="scientific">Oryctolagus cuniculus</name>
    <name type="common">Rabbit</name>
    <dbReference type="NCBI Taxonomy" id="9986"/>
    <lineage>
        <taxon>Eukaryota</taxon>
        <taxon>Metazoa</taxon>
        <taxon>Chordata</taxon>
        <taxon>Craniata</taxon>
        <taxon>Vertebrata</taxon>
        <taxon>Euteleostomi</taxon>
        <taxon>Mammalia</taxon>
        <taxon>Eutheria</taxon>
        <taxon>Euarchontoglires</taxon>
        <taxon>Glires</taxon>
        <taxon>Lagomorpha</taxon>
        <taxon>Leporidae</taxon>
        <taxon>Oryctolagus</taxon>
    </lineage>
</organism>
<gene>
    <name type="primary">SFTPC</name>
    <name type="synonym">SFTP2</name>
</gene>
<comment type="function">
    <text>Pulmonary surfactant associated proteins promote alveolar stability by lowering the surface tension at the air-liquid interface in the peripheral air spaces.</text>
</comment>
<comment type="subcellular location">
    <subcellularLocation>
        <location>Secreted</location>
        <location>Extracellular space</location>
        <location>Surface film</location>
    </subcellularLocation>
</comment>
<comment type="miscellaneous">
    <text>Pulmonary surfactant consists of 90% lipid and 10% protein. There are 4 surfactant-associated proteins: 2 collagenous, carbohydrate-binding glycoproteins (SP-A and SP-D) and 2 small hydrophobic proteins (SP-B and SP-C).</text>
</comment>
<comment type="sequence caution" evidence="6">
    <conflict type="erroneous initiation">
        <sequence resource="EMBL-CDS" id="CAA46204"/>
    </conflict>
</comment>
<keyword id="KW-0903">Direct protein sequencing</keyword>
<keyword id="KW-1015">Disulfide bond</keyword>
<keyword id="KW-0305">Gaseous exchange</keyword>
<keyword id="KW-0449">Lipoprotein</keyword>
<keyword id="KW-0564">Palmitate</keyword>
<keyword id="KW-1185">Reference proteome</keyword>
<keyword id="KW-0964">Secreted</keyword>
<keyword id="KW-0767">Surface film</keyword>